<accession>Q7ZVE6</accession>
<accession>B0CM11</accession>
<accession>Q5RI39</accession>
<name>PLGT2_DANRE</name>
<proteinExistence type="evidence at transcript level"/>
<reference key="1">
    <citation type="journal article" date="2008" name="Genome Res.">
        <title>Large-scale screening for novel low-affinity extracellular protein interactions.</title>
        <authorList>
            <person name="Bushell K.M."/>
            <person name="Soellner C."/>
            <person name="Schuster-Boeckler B."/>
            <person name="Bateman A."/>
            <person name="Wright G.J."/>
        </authorList>
    </citation>
    <scope>NUCLEOTIDE SEQUENCE [LARGE SCALE MRNA]</scope>
</reference>
<reference key="2">
    <citation type="journal article" date="2013" name="Nature">
        <title>The zebrafish reference genome sequence and its relationship to the human genome.</title>
        <authorList>
            <person name="Howe K."/>
            <person name="Clark M.D."/>
            <person name="Torroja C.F."/>
            <person name="Torrance J."/>
            <person name="Berthelot C."/>
            <person name="Muffato M."/>
            <person name="Collins J.E."/>
            <person name="Humphray S."/>
            <person name="McLaren K."/>
            <person name="Matthews L."/>
            <person name="McLaren S."/>
            <person name="Sealy I."/>
            <person name="Caccamo M."/>
            <person name="Churcher C."/>
            <person name="Scott C."/>
            <person name="Barrett J.C."/>
            <person name="Koch R."/>
            <person name="Rauch G.J."/>
            <person name="White S."/>
            <person name="Chow W."/>
            <person name="Kilian B."/>
            <person name="Quintais L.T."/>
            <person name="Guerra-Assuncao J.A."/>
            <person name="Zhou Y."/>
            <person name="Gu Y."/>
            <person name="Yen J."/>
            <person name="Vogel J.H."/>
            <person name="Eyre T."/>
            <person name="Redmond S."/>
            <person name="Banerjee R."/>
            <person name="Chi J."/>
            <person name="Fu B."/>
            <person name="Langley E."/>
            <person name="Maguire S.F."/>
            <person name="Laird G.K."/>
            <person name="Lloyd D."/>
            <person name="Kenyon E."/>
            <person name="Donaldson S."/>
            <person name="Sehra H."/>
            <person name="Almeida-King J."/>
            <person name="Loveland J."/>
            <person name="Trevanion S."/>
            <person name="Jones M."/>
            <person name="Quail M."/>
            <person name="Willey D."/>
            <person name="Hunt A."/>
            <person name="Burton J."/>
            <person name="Sims S."/>
            <person name="McLay K."/>
            <person name="Plumb B."/>
            <person name="Davis J."/>
            <person name="Clee C."/>
            <person name="Oliver K."/>
            <person name="Clark R."/>
            <person name="Riddle C."/>
            <person name="Elliot D."/>
            <person name="Threadgold G."/>
            <person name="Harden G."/>
            <person name="Ware D."/>
            <person name="Begum S."/>
            <person name="Mortimore B."/>
            <person name="Kerry G."/>
            <person name="Heath P."/>
            <person name="Phillimore B."/>
            <person name="Tracey A."/>
            <person name="Corby N."/>
            <person name="Dunn M."/>
            <person name="Johnson C."/>
            <person name="Wood J."/>
            <person name="Clark S."/>
            <person name="Pelan S."/>
            <person name="Griffiths G."/>
            <person name="Smith M."/>
            <person name="Glithero R."/>
            <person name="Howden P."/>
            <person name="Barker N."/>
            <person name="Lloyd C."/>
            <person name="Stevens C."/>
            <person name="Harley J."/>
            <person name="Holt K."/>
            <person name="Panagiotidis G."/>
            <person name="Lovell J."/>
            <person name="Beasley H."/>
            <person name="Henderson C."/>
            <person name="Gordon D."/>
            <person name="Auger K."/>
            <person name="Wright D."/>
            <person name="Collins J."/>
            <person name="Raisen C."/>
            <person name="Dyer L."/>
            <person name="Leung K."/>
            <person name="Robertson L."/>
            <person name="Ambridge K."/>
            <person name="Leongamornlert D."/>
            <person name="McGuire S."/>
            <person name="Gilderthorp R."/>
            <person name="Griffiths C."/>
            <person name="Manthravadi D."/>
            <person name="Nichol S."/>
            <person name="Barker G."/>
            <person name="Whitehead S."/>
            <person name="Kay M."/>
            <person name="Brown J."/>
            <person name="Murnane C."/>
            <person name="Gray E."/>
            <person name="Humphries M."/>
            <person name="Sycamore N."/>
            <person name="Barker D."/>
            <person name="Saunders D."/>
            <person name="Wallis J."/>
            <person name="Babbage A."/>
            <person name="Hammond S."/>
            <person name="Mashreghi-Mohammadi M."/>
            <person name="Barr L."/>
            <person name="Martin S."/>
            <person name="Wray P."/>
            <person name="Ellington A."/>
            <person name="Matthews N."/>
            <person name="Ellwood M."/>
            <person name="Woodmansey R."/>
            <person name="Clark G."/>
            <person name="Cooper J."/>
            <person name="Tromans A."/>
            <person name="Grafham D."/>
            <person name="Skuce C."/>
            <person name="Pandian R."/>
            <person name="Andrews R."/>
            <person name="Harrison E."/>
            <person name="Kimberley A."/>
            <person name="Garnett J."/>
            <person name="Fosker N."/>
            <person name="Hall R."/>
            <person name="Garner P."/>
            <person name="Kelly D."/>
            <person name="Bird C."/>
            <person name="Palmer S."/>
            <person name="Gehring I."/>
            <person name="Berger A."/>
            <person name="Dooley C.M."/>
            <person name="Ersan-Urun Z."/>
            <person name="Eser C."/>
            <person name="Geiger H."/>
            <person name="Geisler M."/>
            <person name="Karotki L."/>
            <person name="Kirn A."/>
            <person name="Konantz J."/>
            <person name="Konantz M."/>
            <person name="Oberlander M."/>
            <person name="Rudolph-Geiger S."/>
            <person name="Teucke M."/>
            <person name="Lanz C."/>
            <person name="Raddatz G."/>
            <person name="Osoegawa K."/>
            <person name="Zhu B."/>
            <person name="Rapp A."/>
            <person name="Widaa S."/>
            <person name="Langford C."/>
            <person name="Yang F."/>
            <person name="Schuster S.C."/>
            <person name="Carter N.P."/>
            <person name="Harrow J."/>
            <person name="Ning Z."/>
            <person name="Herrero J."/>
            <person name="Searle S.M."/>
            <person name="Enright A."/>
            <person name="Geisler R."/>
            <person name="Plasterk R.H."/>
            <person name="Lee C."/>
            <person name="Westerfield M."/>
            <person name="de Jong P.J."/>
            <person name="Zon L.I."/>
            <person name="Postlethwait J.H."/>
            <person name="Nusslein-Volhard C."/>
            <person name="Hubbard T.J."/>
            <person name="Roest Crollius H."/>
            <person name="Rogers J."/>
            <person name="Stemple D.L."/>
        </authorList>
    </citation>
    <scope>NUCLEOTIDE SEQUENCE [LARGE SCALE GENOMIC DNA]</scope>
    <source>
        <strain>Tuebingen</strain>
    </source>
</reference>
<reference key="3">
    <citation type="submission" date="2003-01" db="EMBL/GenBank/DDBJ databases">
        <authorList>
            <consortium name="NIH - Zebrafish Gene Collection (ZGC) project"/>
        </authorList>
    </citation>
    <scope>NUCLEOTIDE SEQUENCE [LARGE SCALE MRNA]</scope>
    <source>
        <strain>AB</strain>
    </source>
</reference>
<organism>
    <name type="scientific">Danio rerio</name>
    <name type="common">Zebrafish</name>
    <name type="synonym">Brachydanio rerio</name>
    <dbReference type="NCBI Taxonomy" id="7955"/>
    <lineage>
        <taxon>Eukaryota</taxon>
        <taxon>Metazoa</taxon>
        <taxon>Chordata</taxon>
        <taxon>Craniata</taxon>
        <taxon>Vertebrata</taxon>
        <taxon>Euteleostomi</taxon>
        <taxon>Actinopterygii</taxon>
        <taxon>Neopterygii</taxon>
        <taxon>Teleostei</taxon>
        <taxon>Ostariophysi</taxon>
        <taxon>Cypriniformes</taxon>
        <taxon>Danionidae</taxon>
        <taxon>Danioninae</taxon>
        <taxon>Danio</taxon>
    </lineage>
</organism>
<dbReference type="EC" id="2.4.1.-" evidence="1"/>
<dbReference type="EC" id="2.4.2.-" evidence="1"/>
<dbReference type="EMBL" id="CU638807">
    <property type="protein sequence ID" value="CAP71956.1"/>
    <property type="molecule type" value="mRNA"/>
</dbReference>
<dbReference type="EMBL" id="BX322637">
    <property type="protein sequence ID" value="CAI20990.1"/>
    <property type="molecule type" value="Genomic_DNA"/>
</dbReference>
<dbReference type="EMBL" id="BC045893">
    <property type="protein sequence ID" value="AAH45893.1"/>
    <property type="molecule type" value="mRNA"/>
</dbReference>
<dbReference type="RefSeq" id="NP_957225.1">
    <property type="nucleotide sequence ID" value="NM_200931.1"/>
</dbReference>
<dbReference type="SMR" id="Q7ZVE6"/>
<dbReference type="FunCoup" id="Q7ZVE6">
    <property type="interactions" value="418"/>
</dbReference>
<dbReference type="STRING" id="7955.ENSDARP00000042296"/>
<dbReference type="CAZy" id="GT90">
    <property type="family name" value="Glycosyltransferase Family 90"/>
</dbReference>
<dbReference type="GlyCosmos" id="Q7ZVE6">
    <property type="glycosylation" value="2 sites, No reported glycans"/>
</dbReference>
<dbReference type="PaxDb" id="7955-ENSDARP00000042296"/>
<dbReference type="GeneID" id="393905"/>
<dbReference type="KEGG" id="dre:393905"/>
<dbReference type="AGR" id="ZFIN:ZDB-GENE-040426-878"/>
<dbReference type="CTD" id="79070"/>
<dbReference type="ZFIN" id="ZDB-GENE-040426-878">
    <property type="gene designation" value="poglut2"/>
</dbReference>
<dbReference type="eggNOG" id="KOG2458">
    <property type="taxonomic scope" value="Eukaryota"/>
</dbReference>
<dbReference type="InParanoid" id="Q7ZVE6"/>
<dbReference type="OrthoDB" id="541052at2759"/>
<dbReference type="PhylomeDB" id="Q7ZVE6"/>
<dbReference type="UniPathway" id="UPA00378"/>
<dbReference type="PRO" id="PR:Q7ZVE6"/>
<dbReference type="Proteomes" id="UP000000437">
    <property type="component" value="Alternate scaffold 9"/>
</dbReference>
<dbReference type="Proteomes" id="UP000000437">
    <property type="component" value="Chromosome 9"/>
</dbReference>
<dbReference type="GO" id="GO:0012505">
    <property type="term" value="C:endomembrane system"/>
    <property type="evidence" value="ECO:0000318"/>
    <property type="project" value="GO_Central"/>
</dbReference>
<dbReference type="GO" id="GO:0005788">
    <property type="term" value="C:endoplasmic reticulum lumen"/>
    <property type="evidence" value="ECO:0007669"/>
    <property type="project" value="UniProtKB-SubCell"/>
</dbReference>
<dbReference type="GO" id="GO:0140561">
    <property type="term" value="F:EGF-domain serine glucosyltransferase activity"/>
    <property type="evidence" value="ECO:0007669"/>
    <property type="project" value="RHEA"/>
</dbReference>
<dbReference type="GO" id="GO:0140562">
    <property type="term" value="F:EGF-domain serine xylosyltransferase activity"/>
    <property type="evidence" value="ECO:0007669"/>
    <property type="project" value="RHEA"/>
</dbReference>
<dbReference type="GO" id="GO:0046527">
    <property type="term" value="F:glucosyltransferase activity"/>
    <property type="evidence" value="ECO:0000318"/>
    <property type="project" value="GO_Central"/>
</dbReference>
<dbReference type="GO" id="GO:0035251">
    <property type="term" value="F:UDP-glucosyltransferase activity"/>
    <property type="evidence" value="ECO:0000250"/>
    <property type="project" value="UniProtKB"/>
</dbReference>
<dbReference type="GO" id="GO:0035252">
    <property type="term" value="F:UDP-xylosyltransferase activity"/>
    <property type="evidence" value="ECO:0000250"/>
    <property type="project" value="UniProtKB"/>
</dbReference>
<dbReference type="GO" id="GO:0007399">
    <property type="term" value="P:nervous system development"/>
    <property type="evidence" value="ECO:0007669"/>
    <property type="project" value="UniProtKB-ARBA"/>
</dbReference>
<dbReference type="GO" id="GO:0018242">
    <property type="term" value="P:protein O-linked glycosylation via serine"/>
    <property type="evidence" value="ECO:0000250"/>
    <property type="project" value="UniProtKB"/>
</dbReference>
<dbReference type="FunFam" id="2.60.40.10:FF:000419">
    <property type="entry name" value="KDEL (Lys-Asp-Glu-Leu) containing 1"/>
    <property type="match status" value="1"/>
</dbReference>
<dbReference type="Gene3D" id="2.60.40.10">
    <property type="entry name" value="Immunoglobulins"/>
    <property type="match status" value="1"/>
</dbReference>
<dbReference type="InterPro" id="IPR006598">
    <property type="entry name" value="CAP10"/>
</dbReference>
<dbReference type="InterPro" id="IPR017868">
    <property type="entry name" value="Filamin/ABP280_repeat-like"/>
</dbReference>
<dbReference type="InterPro" id="IPR001298">
    <property type="entry name" value="Filamin/ABP280_rpt"/>
</dbReference>
<dbReference type="InterPro" id="IPR013783">
    <property type="entry name" value="Ig-like_fold"/>
</dbReference>
<dbReference type="InterPro" id="IPR014756">
    <property type="entry name" value="Ig_E-set"/>
</dbReference>
<dbReference type="InterPro" id="IPR051091">
    <property type="entry name" value="O-Glucosyltr/Glycosyltrsf_90"/>
</dbReference>
<dbReference type="PANTHER" id="PTHR12203">
    <property type="entry name" value="KDEL LYS-ASP-GLU-LEU CONTAINING - RELATED"/>
    <property type="match status" value="1"/>
</dbReference>
<dbReference type="PANTHER" id="PTHR12203:SF21">
    <property type="entry name" value="PROTEIN O-GLUCOSYLTRANSFERASE 2"/>
    <property type="match status" value="1"/>
</dbReference>
<dbReference type="Pfam" id="PF00630">
    <property type="entry name" value="Filamin"/>
    <property type="match status" value="1"/>
</dbReference>
<dbReference type="Pfam" id="PF05686">
    <property type="entry name" value="Glyco_transf_90"/>
    <property type="match status" value="1"/>
</dbReference>
<dbReference type="SMART" id="SM00672">
    <property type="entry name" value="CAP10"/>
    <property type="match status" value="1"/>
</dbReference>
<dbReference type="SMART" id="SM00557">
    <property type="entry name" value="IG_FLMN"/>
    <property type="match status" value="1"/>
</dbReference>
<dbReference type="SUPFAM" id="SSF81296">
    <property type="entry name" value="E set domains"/>
    <property type="match status" value="1"/>
</dbReference>
<dbReference type="PROSITE" id="PS00014">
    <property type="entry name" value="ER_TARGET"/>
    <property type="match status" value="1"/>
</dbReference>
<dbReference type="PROSITE" id="PS50194">
    <property type="entry name" value="FILAMIN_REPEAT"/>
    <property type="match status" value="1"/>
</dbReference>
<evidence type="ECO:0000250" key="1">
    <source>
        <dbReference type="UniProtKB" id="Q6UW63"/>
    </source>
</evidence>
<evidence type="ECO:0000255" key="2"/>
<evidence type="ECO:0000255" key="3">
    <source>
        <dbReference type="PROSITE-ProRule" id="PRU10138"/>
    </source>
</evidence>
<evidence type="ECO:0000305" key="4"/>
<sequence>MLRKLLLLLMSCIIFLTRRSKAAAAASASKTLVWGPGLETNAVLPARFFFIQTVDTTGTNFTTSPGENTFEVKITSPTEPYARIWIQILDRNDGSFLVRYRMYASYTDLHVEVLLKDKLVGKSPYVLRGAVYHESCDCPEPDGALWEKNMHCPASFSQIESDLSIFQSVDPDRNAHEIIQRFGKSHSLCHYTIKNNQVYIKTHGEHVGFRIFMDAFLLSLTRKVKLPDIEFFVNLGDWPLEKRRASQNPSPVFSWCGSNDTRDIVMPTYDLTESVLETMGRVSLDMMSVQGHTGPVWEKKINKGFWRGRDSRKERLELVKLARANTAMLDAALTNFFFFKHDESLYGPLVKHVSFFDFFKYKYQINVDGTVAAYRLPYLLAGDSVVFKHDSIYYEHFYNELQPWVHYIPFRSDLSDLLEKIQWAKDHDEEAKKIALAGQQFARTHLMGDSVFCYYHKLFQKYAELQVTKPKVRDGMELVEQPKDDLFPCYCARKKVRDEL</sequence>
<keyword id="KW-0256">Endoplasmic reticulum</keyword>
<keyword id="KW-0325">Glycoprotein</keyword>
<keyword id="KW-0328">Glycosyltransferase</keyword>
<keyword id="KW-1185">Reference proteome</keyword>
<keyword id="KW-0732">Signal</keyword>
<keyword id="KW-0808">Transferase</keyword>
<feature type="signal peptide" evidence="2">
    <location>
        <begin position="1"/>
        <end position="22"/>
    </location>
</feature>
<feature type="chain" id="PRO_0000247165" description="Protein O-glucosyltransferase 2">
    <location>
        <begin position="23"/>
        <end position="500"/>
    </location>
</feature>
<feature type="repeat" description="Filamin">
    <location>
        <begin position="23"/>
        <end position="128"/>
    </location>
</feature>
<feature type="short sequence motif" description="Prevents secretion from ER" evidence="3">
    <location>
        <begin position="497"/>
        <end position="500"/>
    </location>
</feature>
<feature type="glycosylation site" description="N-linked (GlcNAc...) asparagine" evidence="2">
    <location>
        <position position="60"/>
    </location>
</feature>
<feature type="glycosylation site" description="N-linked (GlcNAc...) asparagine" evidence="2">
    <location>
        <position position="259"/>
    </location>
</feature>
<feature type="sequence conflict" description="In Ref. 1; CAP71956." evidence="4" ref="1">
    <original>A</original>
    <variation>P</variation>
    <location>
        <position position="26"/>
    </location>
</feature>
<feature type="sequence conflict" description="In Ref. 1; CAP71956." evidence="4" ref="1">
    <original>T</original>
    <variation>I</variation>
    <location>
        <position position="69"/>
    </location>
</feature>
<feature type="sequence conflict" description="In Ref. 1; CAP71956." evidence="4" ref="1">
    <original>E</original>
    <variation>V</variation>
    <location>
        <position position="71"/>
    </location>
</feature>
<feature type="sequence conflict" description="In Ref. 1; CAP71956." evidence="4" ref="1">
    <original>Q</original>
    <variation>K</variation>
    <location>
        <position position="167"/>
    </location>
</feature>
<feature type="sequence conflict" description="In Ref. 1; CAP71956." evidence="4" ref="1">
    <original>I</original>
    <variation>V</variation>
    <location>
        <position position="178"/>
    </location>
</feature>
<feature type="sequence conflict" description="In Ref. 2; CAI20990." evidence="4" ref="2">
    <original>R</original>
    <variation>K</variation>
    <location>
        <position position="323"/>
    </location>
</feature>
<feature type="sequence conflict" description="In Ref. 1; CAP71956." evidence="4" ref="1">
    <original>Y</original>
    <variation>C</variation>
    <location>
        <position position="455"/>
    </location>
</feature>
<comment type="function">
    <text evidence="1">Protein glucosyltransferase that catalyzes the transfer of glucose from UDP-glucose to a serine residue within the consensus sequence peptide C-X-N-T-X-G-S-F-X-C. Can also catalyze the transfer of xylose from UDP-xylose but less efficiently.</text>
</comment>
<comment type="catalytic activity">
    <reaction evidence="1">
        <text>L-seryl-[EGF-like domain protein] + UDP-alpha-D-glucose = 3-O-(beta-D-glucosyl)-L-seryl-[EGF-like domain protein] + UDP + H(+)</text>
        <dbReference type="Rhea" id="RHEA:58116"/>
        <dbReference type="Rhea" id="RHEA-COMP:14610"/>
        <dbReference type="Rhea" id="RHEA-COMP:16010"/>
        <dbReference type="ChEBI" id="CHEBI:15378"/>
        <dbReference type="ChEBI" id="CHEBI:29999"/>
        <dbReference type="ChEBI" id="CHEBI:58223"/>
        <dbReference type="ChEBI" id="CHEBI:58885"/>
        <dbReference type="ChEBI" id="CHEBI:140576"/>
    </reaction>
</comment>
<comment type="catalytic activity">
    <reaction evidence="1">
        <text>L-seryl-[EGF-like domain protein] + UDP-alpha-D-xylose = 3-O-(beta-D-xylosyl)-L-seryl-[EGF-like domain protein] + UDP + H(+)</text>
        <dbReference type="Rhea" id="RHEA:62016"/>
        <dbReference type="Rhea" id="RHEA-COMP:16010"/>
        <dbReference type="Rhea" id="RHEA-COMP:16011"/>
        <dbReference type="ChEBI" id="CHEBI:15378"/>
        <dbReference type="ChEBI" id="CHEBI:29999"/>
        <dbReference type="ChEBI" id="CHEBI:57632"/>
        <dbReference type="ChEBI" id="CHEBI:58223"/>
        <dbReference type="ChEBI" id="CHEBI:132085"/>
    </reaction>
</comment>
<comment type="pathway">
    <text evidence="1">Protein modification; protein glycosylation.</text>
</comment>
<comment type="subcellular location">
    <subcellularLocation>
        <location evidence="3">Endoplasmic reticulum lumen</location>
    </subcellularLocation>
</comment>
<comment type="similarity">
    <text evidence="4">Belongs to the KDELC family.</text>
</comment>
<gene>
    <name type="primary">poglut2</name>
    <name type="synonym">kdelc1</name>
    <name type="ORF">si:dkey-22a1.1</name>
    <name type="ORF">zgc:56065</name>
</gene>
<protein>
    <recommendedName>
        <fullName evidence="4">Protein O-glucosyltransferase 2</fullName>
        <ecNumber evidence="1">2.4.1.-</ecNumber>
    </recommendedName>
    <alternativeName>
        <fullName>KDEL motif-containing protein 1</fullName>
    </alternativeName>
    <alternativeName>
        <fullName evidence="4">Protein O-xylosyltransferase POGLUT2</fullName>
        <ecNumber evidence="1">2.4.2.-</ecNumber>
    </alternativeName>
</protein>